<dbReference type="EMBL" id="DS231717">
    <property type="protein sequence ID" value="KNB15936.1"/>
    <property type="molecule type" value="Genomic_DNA"/>
</dbReference>
<dbReference type="RefSeq" id="XP_018253981.1">
    <property type="nucleotide sequence ID" value="XM_018394333.1"/>
</dbReference>
<dbReference type="GeneID" id="28955438"/>
<dbReference type="KEGG" id="fox:FOXG_14257"/>
<dbReference type="OrthoDB" id="67972at110618"/>
<dbReference type="GO" id="GO:0005634">
    <property type="term" value="C:nucleus"/>
    <property type="evidence" value="ECO:0007669"/>
    <property type="project" value="UniProtKB-SubCell"/>
</dbReference>
<dbReference type="GO" id="GO:0003677">
    <property type="term" value="F:DNA binding"/>
    <property type="evidence" value="ECO:0007669"/>
    <property type="project" value="InterPro"/>
</dbReference>
<dbReference type="GO" id="GO:0000981">
    <property type="term" value="F:DNA-binding transcription factor activity, RNA polymerase II-specific"/>
    <property type="evidence" value="ECO:0007669"/>
    <property type="project" value="InterPro"/>
</dbReference>
<dbReference type="GO" id="GO:0008270">
    <property type="term" value="F:zinc ion binding"/>
    <property type="evidence" value="ECO:0007669"/>
    <property type="project" value="InterPro"/>
</dbReference>
<dbReference type="GO" id="GO:0006351">
    <property type="term" value="P:DNA-templated transcription"/>
    <property type="evidence" value="ECO:0007669"/>
    <property type="project" value="InterPro"/>
</dbReference>
<dbReference type="CDD" id="cd12148">
    <property type="entry name" value="fungal_TF_MHR"/>
    <property type="match status" value="1"/>
</dbReference>
<dbReference type="CDD" id="cd00067">
    <property type="entry name" value="GAL4"/>
    <property type="match status" value="1"/>
</dbReference>
<dbReference type="Gene3D" id="2.60.120.330">
    <property type="entry name" value="B-lactam Antibiotic, Isopenicillin N Synthase, Chain"/>
    <property type="match status" value="1"/>
</dbReference>
<dbReference type="Gene3D" id="4.10.240.10">
    <property type="entry name" value="Zn(2)-C6 fungal-type DNA-binding domain"/>
    <property type="match status" value="1"/>
</dbReference>
<dbReference type="InterPro" id="IPR027443">
    <property type="entry name" value="IPNS-like_sf"/>
</dbReference>
<dbReference type="InterPro" id="IPR050815">
    <property type="entry name" value="TF_fung"/>
</dbReference>
<dbReference type="InterPro" id="IPR007219">
    <property type="entry name" value="Transcription_factor_dom_fun"/>
</dbReference>
<dbReference type="InterPro" id="IPR036864">
    <property type="entry name" value="Zn2-C6_fun-type_DNA-bd_sf"/>
</dbReference>
<dbReference type="InterPro" id="IPR001138">
    <property type="entry name" value="Zn2Cys6_DnaBD"/>
</dbReference>
<dbReference type="PANTHER" id="PTHR47338:SF27">
    <property type="entry name" value="ZN(II)2CYS6 TRANSCRIPTION FACTOR (EUROFUNG)"/>
    <property type="match status" value="1"/>
</dbReference>
<dbReference type="PANTHER" id="PTHR47338">
    <property type="entry name" value="ZN(II)2CYS6 TRANSCRIPTION FACTOR (EUROFUNG)-RELATED"/>
    <property type="match status" value="1"/>
</dbReference>
<dbReference type="Pfam" id="PF04082">
    <property type="entry name" value="Fungal_trans"/>
    <property type="match status" value="2"/>
</dbReference>
<dbReference type="Pfam" id="PF00172">
    <property type="entry name" value="Zn_clus"/>
    <property type="match status" value="1"/>
</dbReference>
<dbReference type="PRINTS" id="PR00755">
    <property type="entry name" value="AFLATOXINBRP"/>
</dbReference>
<dbReference type="SMART" id="SM00906">
    <property type="entry name" value="Fungal_trans"/>
    <property type="match status" value="1"/>
</dbReference>
<dbReference type="SMART" id="SM00066">
    <property type="entry name" value="GAL4"/>
    <property type="match status" value="1"/>
</dbReference>
<dbReference type="SUPFAM" id="SSF51197">
    <property type="entry name" value="Clavaminate synthase-like"/>
    <property type="match status" value="1"/>
</dbReference>
<dbReference type="SUPFAM" id="SSF57701">
    <property type="entry name" value="Zn2/Cys6 DNA-binding domain"/>
    <property type="match status" value="1"/>
</dbReference>
<dbReference type="PROSITE" id="PS00463">
    <property type="entry name" value="ZN2_CY6_FUNGAL_1"/>
    <property type="match status" value="1"/>
</dbReference>
<dbReference type="PROSITE" id="PS50048">
    <property type="entry name" value="ZN2_CY6_FUNGAL_2"/>
    <property type="match status" value="1"/>
</dbReference>
<name>TF1A1_FUSO4</name>
<accession>A0A0J9VYS2</accession>
<proteinExistence type="evidence at transcript level"/>
<evidence type="ECO:0000255" key="1">
    <source>
        <dbReference type="PROSITE-ProRule" id="PRU00227"/>
    </source>
</evidence>
<evidence type="ECO:0000269" key="2">
    <source>
    </source>
</evidence>
<evidence type="ECO:0000269" key="3">
    <source>
    </source>
</evidence>
<evidence type="ECO:0000303" key="4">
    <source>
    </source>
</evidence>
<protein>
    <recommendedName>
        <fullName evidence="4">Zn(2)-C6 fungal-type transcription factor FTF1a</fullName>
    </recommendedName>
    <alternativeName>
        <fullName evidence="4">Fusarium transcription factor 1a</fullName>
    </alternativeName>
</protein>
<sequence length="1024" mass="112899">MDFTHFDDVAFAYYGLPDQSSLVSLLDHTHTFQSPTAFPQHQAMSGLAHSGLPFGTLPTGNRSQSMEGSKAPPDRTSPASNAFENPTTDEFGLASCNRADGTDLGGKPREDKAGATPAWSGLKTKAGKERKRLPLACIACRRKKVRCSGEKPACKHCLHSHIPCVYKVTTRKAAPRTNYMVMLDKRPKCMEERIIKATPKSDQEVASFVTRPVVKPAIPGAVPSSKPTKKRGAEEAFGLDLEAWAKAPSKPKIEGDDRPSSLQAQEGEENKLQHEGTEALPSEEIQEHLAEVFFDNIYGQSYHLLHKPSYLRKLKNGTLPPVLVLTVCAVAARFTSNPLGGRSWALGGQAIRMAFALQLHKDLEYDPSGRNGAKTQLSFIDREIRRRIMWACFLLDRFNSSGTDRPMFIREDTIQIPLPVKEKYFQFDMPAPTELLDGQVPHPPSPNDGQIADARENMGVAAFLIRAIALWGRIITYLSQGCKDLDPNLLWEEEPHYIKHLNDAVNLEASLPLSLNYSAENLEVHKTENAASQFLFMHICLQHNILLVSRAAMSARKQQGVHDDFFSEASQRTFSAANRISEFLREAEQSRCFVSAPFAGYCAFSSATVHILGIISCNPSMKPTAEANLTTNVKYLHKMKKYWERATQLSFLQYGDWYNRYPRGLSDAEFMDPATHKRKDSGADGVLEAKPELRSVEEYSTLPTPRRVENKDTIRAAAPKRKQSAKKQTGMPAQPGQHLDSLQSTDADAVSQERKFSGGLGLQITGAAGFNPLSASNQQNPDFSTTMSPTSPANMTPFSHYAHTPTFFPPELLSIDFGQGSNGNIDPLDRQLIYGGYSMDASTGLCGGQDMMSGLGWDTVASGAQPDGCLQGRPPNVKAGMHGQSAASSSFPAINKTNGKGKEGRGIGSHTDYGLLVIAAADDVGGDMMQYMTNSVLPSTPHKVGLNLRERFAFAYFHEPSFQAVVRPLPGYDHGQEPKGGIHYGKQFTDMFMRNYPQRITTQRLNDEGRYRLLDQESLQTMSP</sequence>
<feature type="chain" id="PRO_0000462481" description="Zn(2)-C6 fungal-type transcription factor FTF1a">
    <location>
        <begin position="1"/>
        <end position="1024"/>
    </location>
</feature>
<feature type="DNA-binding region" description="Zn(2)-C6 fungal-type" evidence="1">
    <location>
        <begin position="137"/>
        <end position="164"/>
    </location>
</feature>
<comment type="function">
    <text evidence="2 3">Zn(2)-C6 fungal-type transcription factor that has a role in the establishment of the fungus within the plant and/or the progress of the disease (PubMed:17462924, PubMed:26817616). Regulates the expression of virulence factors such as SIX1 and SIX6 (PubMed:26817616).</text>
</comment>
<comment type="subcellular location">
    <subcellularLocation>
        <location evidence="1">Nucleus</location>
    </subcellularLocation>
</comment>
<comment type="induction">
    <text evidence="2">Exclusively expressed during infection of common bean.</text>
</comment>
<comment type="miscellaneous">
    <text evidence="2">Multiple copies of the gene are present in highly virulent fusarium oxysporum strains.</text>
</comment>
<reference key="1">
    <citation type="journal article" date="2010" name="Nature">
        <title>Comparative genomics reveals mobile pathogenicity chromosomes in Fusarium.</title>
        <authorList>
            <person name="Ma L.-J."/>
            <person name="van der Does H.C."/>
            <person name="Borkovich K.A."/>
            <person name="Coleman J.J."/>
            <person name="Daboussi M.-J."/>
            <person name="Di Pietro A."/>
            <person name="Dufresne M."/>
            <person name="Freitag M."/>
            <person name="Grabherr M."/>
            <person name="Henrissat B."/>
            <person name="Houterman P.M."/>
            <person name="Kang S."/>
            <person name="Shim W.-B."/>
            <person name="Woloshuk C."/>
            <person name="Xie X."/>
            <person name="Xu J.-R."/>
            <person name="Antoniw J."/>
            <person name="Baker S.E."/>
            <person name="Bluhm B.H."/>
            <person name="Breakspear A."/>
            <person name="Brown D.W."/>
            <person name="Butchko R.A.E."/>
            <person name="Chapman S."/>
            <person name="Coulson R."/>
            <person name="Coutinho P.M."/>
            <person name="Danchin E.G.J."/>
            <person name="Diener A."/>
            <person name="Gale L.R."/>
            <person name="Gardiner D.M."/>
            <person name="Goff S."/>
            <person name="Hammond-Kosack K.E."/>
            <person name="Hilburn K."/>
            <person name="Hua-Van A."/>
            <person name="Jonkers W."/>
            <person name="Kazan K."/>
            <person name="Kodira C.D."/>
            <person name="Koehrsen M."/>
            <person name="Kumar L."/>
            <person name="Lee Y.-H."/>
            <person name="Li L."/>
            <person name="Manners J.M."/>
            <person name="Miranda-Saavedra D."/>
            <person name="Mukherjee M."/>
            <person name="Park G."/>
            <person name="Park J."/>
            <person name="Park S.-Y."/>
            <person name="Proctor R.H."/>
            <person name="Regev A."/>
            <person name="Ruiz-Roldan M.C."/>
            <person name="Sain D."/>
            <person name="Sakthikumar S."/>
            <person name="Sykes S."/>
            <person name="Schwartz D.C."/>
            <person name="Turgeon B.G."/>
            <person name="Wapinski I."/>
            <person name="Yoder O."/>
            <person name="Young S."/>
            <person name="Zeng Q."/>
            <person name="Zhou S."/>
            <person name="Galagan J."/>
            <person name="Cuomo C.A."/>
            <person name="Kistler H.C."/>
            <person name="Rep M."/>
        </authorList>
    </citation>
    <scope>NUCLEOTIDE SEQUENCE [LARGE SCALE GENOMIC DNA]</scope>
    <source>
        <strain>4287 / CBS 123668 / FGSC 9935 / NRRL 34936</strain>
    </source>
</reference>
<reference key="2">
    <citation type="journal article" date="2007" name="Fungal Genet. Biol.">
        <title>The gene coding for a new transcription factor (ftf1) of Fusarium oxysporum is only expressed during infection of common bean.</title>
        <authorList>
            <person name="Ramos B."/>
            <person name="Alves-Santos F.M."/>
            <person name="Garcia-Sanchez M.A."/>
            <person name="Martin-Rodrigues N."/>
            <person name="Eslava A.P."/>
            <person name="Diaz-Minguez J.M."/>
        </authorList>
    </citation>
    <scope>FUNCTION</scope>
    <scope>INDUCTION</scope>
</reference>
<reference key="3">
    <citation type="journal article" date="2016" name="Mol. Plant Pathol.">
        <title>The FTF gene family regulates virulence and expression of SIX effectors in Fusarium oxysporum.</title>
        <authorList>
            <person name="Nino-Sanchez J."/>
            <person name="Casado-Del Castillo V."/>
            <person name="Tello V."/>
            <person name="De Vega-Bartol J.J."/>
            <person name="Ramos B."/>
            <person name="Sukno S.A."/>
            <person name="Diaz Minguez J.M."/>
        </authorList>
    </citation>
    <scope>FUNCTION</scope>
</reference>
<keyword id="KW-0479">Metal-binding</keyword>
<keyword id="KW-0539">Nucleus</keyword>
<keyword id="KW-0804">Transcription</keyword>
<keyword id="KW-0805">Transcription regulation</keyword>
<keyword id="KW-0843">Virulence</keyword>
<organism>
    <name type="scientific">Fusarium oxysporum f. sp. lycopersici (strain 4287 / CBS 123668 / FGSC 9935 / NRRL 34936)</name>
    <name type="common">Fusarium vascular wilt of tomato</name>
    <dbReference type="NCBI Taxonomy" id="426428"/>
    <lineage>
        <taxon>Eukaryota</taxon>
        <taxon>Fungi</taxon>
        <taxon>Dikarya</taxon>
        <taxon>Ascomycota</taxon>
        <taxon>Pezizomycotina</taxon>
        <taxon>Sordariomycetes</taxon>
        <taxon>Hypocreomycetidae</taxon>
        <taxon>Hypocreales</taxon>
        <taxon>Nectriaceae</taxon>
        <taxon>Fusarium</taxon>
        <taxon>Fusarium oxysporum species complex</taxon>
    </lineage>
</organism>
<gene>
    <name evidence="4" type="primary">FTF1a</name>
    <name type="ORF">FOXG_14257</name>
</gene>